<accession>B3EUJ9</accession>
<sequence>MARILGVDIPDNKRGEIALTYIFGIGRSSANQILAAAGVNKDKRVSSWTDEESQTIRTVINENYKVEGELKSEIRLNIKRLVDIGCYRGRRHVLGLPVRGQSTKNNARTRKGKRKTVANKKKAAKK</sequence>
<reference key="1">
    <citation type="journal article" date="2010" name="J. Bacteriol.">
        <title>The genome of the amoeba symbiont 'Candidatus Amoebophilus asiaticus' reveals common mechanisms for host cell interaction among amoeba-associated bacteria.</title>
        <authorList>
            <person name="Schmitz-Esser S."/>
            <person name="Tischler P."/>
            <person name="Arnold R."/>
            <person name="Montanaro J."/>
            <person name="Wagner M."/>
            <person name="Rattei T."/>
            <person name="Horn M."/>
        </authorList>
    </citation>
    <scope>NUCLEOTIDE SEQUENCE [LARGE SCALE GENOMIC DNA]</scope>
    <source>
        <strain>5a2</strain>
    </source>
</reference>
<feature type="chain" id="PRO_1000141212" description="Small ribosomal subunit protein uS13">
    <location>
        <begin position="1"/>
        <end position="126"/>
    </location>
</feature>
<feature type="region of interest" description="Disordered" evidence="2">
    <location>
        <begin position="98"/>
        <end position="126"/>
    </location>
</feature>
<feature type="compositionally biased region" description="Basic residues" evidence="2">
    <location>
        <begin position="107"/>
        <end position="126"/>
    </location>
</feature>
<protein>
    <recommendedName>
        <fullName evidence="1">Small ribosomal subunit protein uS13</fullName>
    </recommendedName>
    <alternativeName>
        <fullName evidence="3">30S ribosomal protein S13</fullName>
    </alternativeName>
</protein>
<comment type="function">
    <text evidence="1">Located at the top of the head of the 30S subunit, it contacts several helices of the 16S rRNA. In the 70S ribosome it contacts the 23S rRNA (bridge B1a) and protein L5 of the 50S subunit (bridge B1b), connecting the 2 subunits; these bridges are implicated in subunit movement. Contacts the tRNAs in the A and P-sites.</text>
</comment>
<comment type="subunit">
    <text evidence="1">Part of the 30S ribosomal subunit. Forms a loose heterodimer with protein S19. Forms two bridges to the 50S subunit in the 70S ribosome.</text>
</comment>
<comment type="similarity">
    <text evidence="1">Belongs to the universal ribosomal protein uS13 family.</text>
</comment>
<keyword id="KW-1185">Reference proteome</keyword>
<keyword id="KW-0687">Ribonucleoprotein</keyword>
<keyword id="KW-0689">Ribosomal protein</keyword>
<keyword id="KW-0694">RNA-binding</keyword>
<keyword id="KW-0699">rRNA-binding</keyword>
<keyword id="KW-0820">tRNA-binding</keyword>
<gene>
    <name evidence="1" type="primary">rpsM</name>
    <name type="ordered locus">Aasi_0173</name>
</gene>
<proteinExistence type="inferred from homology"/>
<organism>
    <name type="scientific">Amoebophilus asiaticus (strain 5a2)</name>
    <dbReference type="NCBI Taxonomy" id="452471"/>
    <lineage>
        <taxon>Bacteria</taxon>
        <taxon>Pseudomonadati</taxon>
        <taxon>Bacteroidota</taxon>
        <taxon>Cytophagia</taxon>
        <taxon>Cytophagales</taxon>
        <taxon>Amoebophilaceae</taxon>
        <taxon>Candidatus Amoebophilus</taxon>
    </lineage>
</organism>
<dbReference type="EMBL" id="CP001102">
    <property type="protein sequence ID" value="ACE05618.1"/>
    <property type="molecule type" value="Genomic_DNA"/>
</dbReference>
<dbReference type="RefSeq" id="WP_012472384.1">
    <property type="nucleotide sequence ID" value="NC_010830.1"/>
</dbReference>
<dbReference type="SMR" id="B3EUJ9"/>
<dbReference type="STRING" id="452471.Aasi_0173"/>
<dbReference type="KEGG" id="aas:Aasi_0173"/>
<dbReference type="eggNOG" id="COG0099">
    <property type="taxonomic scope" value="Bacteria"/>
</dbReference>
<dbReference type="HOGENOM" id="CLU_103849_1_2_10"/>
<dbReference type="OrthoDB" id="9803610at2"/>
<dbReference type="Proteomes" id="UP000001227">
    <property type="component" value="Chromosome"/>
</dbReference>
<dbReference type="GO" id="GO:0005829">
    <property type="term" value="C:cytosol"/>
    <property type="evidence" value="ECO:0007669"/>
    <property type="project" value="TreeGrafter"/>
</dbReference>
<dbReference type="GO" id="GO:0015935">
    <property type="term" value="C:small ribosomal subunit"/>
    <property type="evidence" value="ECO:0007669"/>
    <property type="project" value="TreeGrafter"/>
</dbReference>
<dbReference type="GO" id="GO:0019843">
    <property type="term" value="F:rRNA binding"/>
    <property type="evidence" value="ECO:0007669"/>
    <property type="project" value="UniProtKB-UniRule"/>
</dbReference>
<dbReference type="GO" id="GO:0003735">
    <property type="term" value="F:structural constituent of ribosome"/>
    <property type="evidence" value="ECO:0007669"/>
    <property type="project" value="InterPro"/>
</dbReference>
<dbReference type="GO" id="GO:0000049">
    <property type="term" value="F:tRNA binding"/>
    <property type="evidence" value="ECO:0007669"/>
    <property type="project" value="UniProtKB-UniRule"/>
</dbReference>
<dbReference type="GO" id="GO:0006412">
    <property type="term" value="P:translation"/>
    <property type="evidence" value="ECO:0007669"/>
    <property type="project" value="UniProtKB-UniRule"/>
</dbReference>
<dbReference type="FunFam" id="1.10.8.50:FF:000001">
    <property type="entry name" value="30S ribosomal protein S13"/>
    <property type="match status" value="1"/>
</dbReference>
<dbReference type="FunFam" id="4.10.910.10:FF:000001">
    <property type="entry name" value="30S ribosomal protein S13"/>
    <property type="match status" value="1"/>
</dbReference>
<dbReference type="Gene3D" id="1.10.8.50">
    <property type="match status" value="1"/>
</dbReference>
<dbReference type="Gene3D" id="4.10.910.10">
    <property type="entry name" value="30s ribosomal protein s13, domain 2"/>
    <property type="match status" value="1"/>
</dbReference>
<dbReference type="HAMAP" id="MF_01315">
    <property type="entry name" value="Ribosomal_uS13"/>
    <property type="match status" value="1"/>
</dbReference>
<dbReference type="InterPro" id="IPR027437">
    <property type="entry name" value="Rbsml_uS13_C"/>
</dbReference>
<dbReference type="InterPro" id="IPR001892">
    <property type="entry name" value="Ribosomal_uS13"/>
</dbReference>
<dbReference type="InterPro" id="IPR010979">
    <property type="entry name" value="Ribosomal_uS13-like_H2TH"/>
</dbReference>
<dbReference type="InterPro" id="IPR019980">
    <property type="entry name" value="Ribosomal_uS13_bac-type"/>
</dbReference>
<dbReference type="InterPro" id="IPR018269">
    <property type="entry name" value="Ribosomal_uS13_CS"/>
</dbReference>
<dbReference type="NCBIfam" id="TIGR03631">
    <property type="entry name" value="uS13_bact"/>
    <property type="match status" value="1"/>
</dbReference>
<dbReference type="PANTHER" id="PTHR10871">
    <property type="entry name" value="30S RIBOSOMAL PROTEIN S13/40S RIBOSOMAL PROTEIN S18"/>
    <property type="match status" value="1"/>
</dbReference>
<dbReference type="PANTHER" id="PTHR10871:SF1">
    <property type="entry name" value="SMALL RIBOSOMAL SUBUNIT PROTEIN US13M"/>
    <property type="match status" value="1"/>
</dbReference>
<dbReference type="Pfam" id="PF00416">
    <property type="entry name" value="Ribosomal_S13"/>
    <property type="match status" value="1"/>
</dbReference>
<dbReference type="PIRSF" id="PIRSF002134">
    <property type="entry name" value="Ribosomal_S13"/>
    <property type="match status" value="1"/>
</dbReference>
<dbReference type="SUPFAM" id="SSF46946">
    <property type="entry name" value="S13-like H2TH domain"/>
    <property type="match status" value="1"/>
</dbReference>
<dbReference type="PROSITE" id="PS00646">
    <property type="entry name" value="RIBOSOMAL_S13_1"/>
    <property type="match status" value="1"/>
</dbReference>
<dbReference type="PROSITE" id="PS50159">
    <property type="entry name" value="RIBOSOMAL_S13_2"/>
    <property type="match status" value="1"/>
</dbReference>
<name>RS13_AMOA5</name>
<evidence type="ECO:0000255" key="1">
    <source>
        <dbReference type="HAMAP-Rule" id="MF_01315"/>
    </source>
</evidence>
<evidence type="ECO:0000256" key="2">
    <source>
        <dbReference type="SAM" id="MobiDB-lite"/>
    </source>
</evidence>
<evidence type="ECO:0000305" key="3"/>